<comment type="function">
    <text evidence="1">Catalyzes the transfer of the phosphoribosyl group of 5-phosphorylribose-1-pyrophosphate (PRPP) to anthranilate to yield N-(5'-phosphoribosyl)-anthranilate (PRA).</text>
</comment>
<comment type="catalytic activity">
    <reaction evidence="1">
        <text>N-(5-phospho-beta-D-ribosyl)anthranilate + diphosphate = 5-phospho-alpha-D-ribose 1-diphosphate + anthranilate</text>
        <dbReference type="Rhea" id="RHEA:11768"/>
        <dbReference type="ChEBI" id="CHEBI:16567"/>
        <dbReference type="ChEBI" id="CHEBI:18277"/>
        <dbReference type="ChEBI" id="CHEBI:33019"/>
        <dbReference type="ChEBI" id="CHEBI:58017"/>
        <dbReference type="EC" id="2.4.2.18"/>
    </reaction>
</comment>
<comment type="cofactor">
    <cofactor evidence="1">
        <name>Mg(2+)</name>
        <dbReference type="ChEBI" id="CHEBI:18420"/>
    </cofactor>
    <text evidence="1">Binds 2 magnesium ions per monomer.</text>
</comment>
<comment type="pathway">
    <text evidence="1">Amino-acid biosynthesis; L-tryptophan biosynthesis; L-tryptophan from chorismate: step 2/5.</text>
</comment>
<comment type="subunit">
    <text evidence="1">Homodimer.</text>
</comment>
<comment type="similarity">
    <text evidence="1">Belongs to the anthranilate phosphoribosyltransferase family.</text>
</comment>
<comment type="sequence caution" evidence="2">
    <conflict type="erroneous initiation">
        <sequence resource="EMBL-CDS" id="AAL52025"/>
    </conflict>
    <text>Extended N-terminus.</text>
</comment>
<sequence length="339" mass="34839">MADLKPYIAKAASGEPLPLGDAKAAFDIMMSGQATPSQIGGFLMALRVRGETVPEIAGAVASMRSRMIPVIAPDDAMDIVGTGGDQSGSYNVSSCTAFVVAGAGVPVAKHGNRALSSRSGAADALAALGINIEADADTIGRSISEAGLGFMFAPMHHSAMRHVGPSRVELGTRTIFNLLGPLSNPASVKRQLVGVFAPQWLEPLAHVLKELGSETAWVVYGDGLDEMTTAGTTQVAALENGQIRTFEITPEEVGLRRCSPAELKGGEAAENAKALLGVLEGKDSAYRDIVLLNSGAALVVAGKAENLKDGIAQAVQSIDSGAALAVLQKVIAVSNDKPA</sequence>
<accession>Q8YHF7</accession>
<dbReference type="EC" id="2.4.2.18" evidence="1"/>
<dbReference type="EMBL" id="AE008917">
    <property type="protein sequence ID" value="AAL52025.1"/>
    <property type="status" value="ALT_INIT"/>
    <property type="molecule type" value="Genomic_DNA"/>
</dbReference>
<dbReference type="PIR" id="AF3357">
    <property type="entry name" value="AF3357"/>
</dbReference>
<dbReference type="RefSeq" id="WP_002969119.1">
    <property type="nucleotide sequence ID" value="NZ_GG703780.1"/>
</dbReference>
<dbReference type="SMR" id="Q8YHF7"/>
<dbReference type="GeneID" id="93016524"/>
<dbReference type="KEGG" id="bme:BMEI0844"/>
<dbReference type="KEGG" id="bmel:DK63_576"/>
<dbReference type="PATRIC" id="fig|224914.52.peg.600"/>
<dbReference type="eggNOG" id="COG0547">
    <property type="taxonomic scope" value="Bacteria"/>
</dbReference>
<dbReference type="UniPathway" id="UPA00035">
    <property type="reaction ID" value="UER00041"/>
</dbReference>
<dbReference type="Proteomes" id="UP000000419">
    <property type="component" value="Chromosome I"/>
</dbReference>
<dbReference type="GO" id="GO:0005829">
    <property type="term" value="C:cytosol"/>
    <property type="evidence" value="ECO:0007669"/>
    <property type="project" value="TreeGrafter"/>
</dbReference>
<dbReference type="GO" id="GO:0004048">
    <property type="term" value="F:anthranilate phosphoribosyltransferase activity"/>
    <property type="evidence" value="ECO:0007669"/>
    <property type="project" value="UniProtKB-UniRule"/>
</dbReference>
<dbReference type="GO" id="GO:0000287">
    <property type="term" value="F:magnesium ion binding"/>
    <property type="evidence" value="ECO:0007669"/>
    <property type="project" value="UniProtKB-UniRule"/>
</dbReference>
<dbReference type="GO" id="GO:0000162">
    <property type="term" value="P:L-tryptophan biosynthetic process"/>
    <property type="evidence" value="ECO:0007669"/>
    <property type="project" value="UniProtKB-UniRule"/>
</dbReference>
<dbReference type="FunFam" id="3.40.1030.10:FF:000002">
    <property type="entry name" value="Anthranilate phosphoribosyltransferase"/>
    <property type="match status" value="1"/>
</dbReference>
<dbReference type="Gene3D" id="3.40.1030.10">
    <property type="entry name" value="Nucleoside phosphorylase/phosphoribosyltransferase catalytic domain"/>
    <property type="match status" value="1"/>
</dbReference>
<dbReference type="Gene3D" id="1.20.970.10">
    <property type="entry name" value="Transferase, Pyrimidine Nucleoside Phosphorylase, Chain C"/>
    <property type="match status" value="1"/>
</dbReference>
<dbReference type="HAMAP" id="MF_00211">
    <property type="entry name" value="TrpD"/>
    <property type="match status" value="1"/>
</dbReference>
<dbReference type="InterPro" id="IPR005940">
    <property type="entry name" value="Anthranilate_Pribosyl_Tfrase"/>
</dbReference>
<dbReference type="InterPro" id="IPR000312">
    <property type="entry name" value="Glycosyl_Trfase_fam3"/>
</dbReference>
<dbReference type="InterPro" id="IPR017459">
    <property type="entry name" value="Glycosyl_Trfase_fam3_N_dom"/>
</dbReference>
<dbReference type="InterPro" id="IPR036320">
    <property type="entry name" value="Glycosyl_Trfase_fam3_N_dom_sf"/>
</dbReference>
<dbReference type="InterPro" id="IPR035902">
    <property type="entry name" value="Nuc_phospho_transferase"/>
</dbReference>
<dbReference type="NCBIfam" id="TIGR01245">
    <property type="entry name" value="trpD"/>
    <property type="match status" value="1"/>
</dbReference>
<dbReference type="PANTHER" id="PTHR43285">
    <property type="entry name" value="ANTHRANILATE PHOSPHORIBOSYLTRANSFERASE"/>
    <property type="match status" value="1"/>
</dbReference>
<dbReference type="PANTHER" id="PTHR43285:SF2">
    <property type="entry name" value="ANTHRANILATE PHOSPHORIBOSYLTRANSFERASE"/>
    <property type="match status" value="1"/>
</dbReference>
<dbReference type="Pfam" id="PF02885">
    <property type="entry name" value="Glycos_trans_3N"/>
    <property type="match status" value="1"/>
</dbReference>
<dbReference type="Pfam" id="PF00591">
    <property type="entry name" value="Glycos_transf_3"/>
    <property type="match status" value="1"/>
</dbReference>
<dbReference type="SUPFAM" id="SSF52418">
    <property type="entry name" value="Nucleoside phosphorylase/phosphoribosyltransferase catalytic domain"/>
    <property type="match status" value="1"/>
</dbReference>
<dbReference type="SUPFAM" id="SSF47648">
    <property type="entry name" value="Nucleoside phosphorylase/phosphoribosyltransferase N-terminal domain"/>
    <property type="match status" value="1"/>
</dbReference>
<evidence type="ECO:0000255" key="1">
    <source>
        <dbReference type="HAMAP-Rule" id="MF_00211"/>
    </source>
</evidence>
<evidence type="ECO:0000305" key="2"/>
<protein>
    <recommendedName>
        <fullName evidence="1">Anthranilate phosphoribosyltransferase</fullName>
        <ecNumber evidence="1">2.4.2.18</ecNumber>
    </recommendedName>
</protein>
<proteinExistence type="inferred from homology"/>
<keyword id="KW-0028">Amino-acid biosynthesis</keyword>
<keyword id="KW-0057">Aromatic amino acid biosynthesis</keyword>
<keyword id="KW-0328">Glycosyltransferase</keyword>
<keyword id="KW-0460">Magnesium</keyword>
<keyword id="KW-0479">Metal-binding</keyword>
<keyword id="KW-0808">Transferase</keyword>
<keyword id="KW-0822">Tryptophan biosynthesis</keyword>
<gene>
    <name evidence="1" type="primary">trpD</name>
    <name type="ordered locus">BMEI0844</name>
</gene>
<feature type="chain" id="PRO_0000154432" description="Anthranilate phosphoribosyltransferase">
    <location>
        <begin position="1"/>
        <end position="339"/>
    </location>
</feature>
<feature type="binding site" evidence="1">
    <location>
        <position position="81"/>
    </location>
    <ligand>
        <name>5-phospho-alpha-D-ribose 1-diphosphate</name>
        <dbReference type="ChEBI" id="CHEBI:58017"/>
    </ligand>
</feature>
<feature type="binding site" evidence="1">
    <location>
        <position position="81"/>
    </location>
    <ligand>
        <name>anthranilate</name>
        <dbReference type="ChEBI" id="CHEBI:16567"/>
        <label>1</label>
    </ligand>
</feature>
<feature type="binding site" evidence="1">
    <location>
        <begin position="84"/>
        <end position="85"/>
    </location>
    <ligand>
        <name>5-phospho-alpha-D-ribose 1-diphosphate</name>
        <dbReference type="ChEBI" id="CHEBI:58017"/>
    </ligand>
</feature>
<feature type="binding site" evidence="1">
    <location>
        <position position="89"/>
    </location>
    <ligand>
        <name>5-phospho-alpha-D-ribose 1-diphosphate</name>
        <dbReference type="ChEBI" id="CHEBI:58017"/>
    </ligand>
</feature>
<feature type="binding site" evidence="1">
    <location>
        <begin position="91"/>
        <end position="94"/>
    </location>
    <ligand>
        <name>5-phospho-alpha-D-ribose 1-diphosphate</name>
        <dbReference type="ChEBI" id="CHEBI:58017"/>
    </ligand>
</feature>
<feature type="binding site" evidence="1">
    <location>
        <position position="93"/>
    </location>
    <ligand>
        <name>Mg(2+)</name>
        <dbReference type="ChEBI" id="CHEBI:18420"/>
        <label>1</label>
    </ligand>
</feature>
<feature type="binding site" evidence="1">
    <location>
        <begin position="109"/>
        <end position="117"/>
    </location>
    <ligand>
        <name>5-phospho-alpha-D-ribose 1-diphosphate</name>
        <dbReference type="ChEBI" id="CHEBI:58017"/>
    </ligand>
</feature>
<feature type="binding site" evidence="1">
    <location>
        <position position="112"/>
    </location>
    <ligand>
        <name>anthranilate</name>
        <dbReference type="ChEBI" id="CHEBI:16567"/>
        <label>1</label>
    </ligand>
</feature>
<feature type="binding site" evidence="1">
    <location>
        <position position="121"/>
    </location>
    <ligand>
        <name>5-phospho-alpha-D-ribose 1-diphosphate</name>
        <dbReference type="ChEBI" id="CHEBI:58017"/>
    </ligand>
</feature>
<feature type="binding site" evidence="1">
    <location>
        <position position="167"/>
    </location>
    <ligand>
        <name>anthranilate</name>
        <dbReference type="ChEBI" id="CHEBI:16567"/>
        <label>2</label>
    </ligand>
</feature>
<feature type="binding site" evidence="1">
    <location>
        <position position="225"/>
    </location>
    <ligand>
        <name>Mg(2+)</name>
        <dbReference type="ChEBI" id="CHEBI:18420"/>
        <label>2</label>
    </ligand>
</feature>
<feature type="binding site" evidence="1">
    <location>
        <position position="226"/>
    </location>
    <ligand>
        <name>Mg(2+)</name>
        <dbReference type="ChEBI" id="CHEBI:18420"/>
        <label>1</label>
    </ligand>
</feature>
<feature type="binding site" evidence="1">
    <location>
        <position position="226"/>
    </location>
    <ligand>
        <name>Mg(2+)</name>
        <dbReference type="ChEBI" id="CHEBI:18420"/>
        <label>2</label>
    </ligand>
</feature>
<organism>
    <name type="scientific">Brucella melitensis biotype 1 (strain ATCC 23456 / CCUG 17765 / NCTC 10094 / 16M)</name>
    <dbReference type="NCBI Taxonomy" id="224914"/>
    <lineage>
        <taxon>Bacteria</taxon>
        <taxon>Pseudomonadati</taxon>
        <taxon>Pseudomonadota</taxon>
        <taxon>Alphaproteobacteria</taxon>
        <taxon>Hyphomicrobiales</taxon>
        <taxon>Brucellaceae</taxon>
        <taxon>Brucella/Ochrobactrum group</taxon>
        <taxon>Brucella</taxon>
    </lineage>
</organism>
<reference key="1">
    <citation type="journal article" date="2002" name="Proc. Natl. Acad. Sci. U.S.A.">
        <title>The genome sequence of the facultative intracellular pathogen Brucella melitensis.</title>
        <authorList>
            <person name="DelVecchio V.G."/>
            <person name="Kapatral V."/>
            <person name="Redkar R.J."/>
            <person name="Patra G."/>
            <person name="Mujer C."/>
            <person name="Los T."/>
            <person name="Ivanova N."/>
            <person name="Anderson I."/>
            <person name="Bhattacharyya A."/>
            <person name="Lykidis A."/>
            <person name="Reznik G."/>
            <person name="Jablonski L."/>
            <person name="Larsen N."/>
            <person name="D'Souza M."/>
            <person name="Bernal A."/>
            <person name="Mazur M."/>
            <person name="Goltsman E."/>
            <person name="Selkov E."/>
            <person name="Elzer P.H."/>
            <person name="Hagius S."/>
            <person name="O'Callaghan D."/>
            <person name="Letesson J.-J."/>
            <person name="Haselkorn R."/>
            <person name="Kyrpides N.C."/>
            <person name="Overbeek R."/>
        </authorList>
    </citation>
    <scope>NUCLEOTIDE SEQUENCE [LARGE SCALE GENOMIC DNA]</scope>
    <source>
        <strain>ATCC 23456 / CCUG 17765 / NCTC 10094 / 16M</strain>
    </source>
</reference>
<name>TRPD_BRUME</name>